<comment type="function">
    <text evidence="1">Bidirectionally degrades single-stranded DNA into large acid-insoluble oligonucleotides, which are then degraded further into small acid-soluble oligonucleotides.</text>
</comment>
<comment type="catalytic activity">
    <reaction evidence="1">
        <text>Exonucleolytic cleavage in either 5'- to 3'- or 3'- to 5'-direction to yield nucleoside 5'-phosphates.</text>
        <dbReference type="EC" id="3.1.11.6"/>
    </reaction>
</comment>
<comment type="subunit">
    <text evidence="1">Heterooligomer composed of large and small subunits.</text>
</comment>
<comment type="subcellular location">
    <subcellularLocation>
        <location evidence="1">Cytoplasm</location>
    </subcellularLocation>
</comment>
<comment type="similarity">
    <text evidence="1">Belongs to the XseB family.</text>
</comment>
<organism>
    <name type="scientific">Ruthia magnifica subsp. Calyptogena magnifica</name>
    <dbReference type="NCBI Taxonomy" id="413404"/>
    <lineage>
        <taxon>Bacteria</taxon>
        <taxon>Pseudomonadati</taxon>
        <taxon>Pseudomonadota</taxon>
        <taxon>Gammaproteobacteria</taxon>
        <taxon>Candidatus Pseudothioglobaceae</taxon>
        <taxon>Candidatus Ruthturnera</taxon>
    </lineage>
</organism>
<keyword id="KW-0963">Cytoplasm</keyword>
<keyword id="KW-0269">Exonuclease</keyword>
<keyword id="KW-0378">Hydrolase</keyword>
<keyword id="KW-0540">Nuclease</keyword>
<name>EX7S_RUTMC</name>
<proteinExistence type="inferred from homology"/>
<feature type="chain" id="PRO_0000303743" description="Exodeoxyribonuclease 7 small subunit">
    <location>
        <begin position="1"/>
        <end position="74"/>
    </location>
</feature>
<dbReference type="EC" id="3.1.11.6" evidence="1"/>
<dbReference type="EMBL" id="CP000488">
    <property type="protein sequence ID" value="ABL02237.1"/>
    <property type="molecule type" value="Genomic_DNA"/>
</dbReference>
<dbReference type="RefSeq" id="WP_011737862.1">
    <property type="nucleotide sequence ID" value="NC_008610.1"/>
</dbReference>
<dbReference type="SMR" id="A1AWD0"/>
<dbReference type="STRING" id="413404.Rmag_0481"/>
<dbReference type="KEGG" id="rma:Rmag_0481"/>
<dbReference type="eggNOG" id="COG1722">
    <property type="taxonomic scope" value="Bacteria"/>
</dbReference>
<dbReference type="HOGENOM" id="CLU_145918_3_1_6"/>
<dbReference type="OrthoDB" id="9801128at2"/>
<dbReference type="Proteomes" id="UP000002587">
    <property type="component" value="Chromosome"/>
</dbReference>
<dbReference type="GO" id="GO:0005829">
    <property type="term" value="C:cytosol"/>
    <property type="evidence" value="ECO:0007669"/>
    <property type="project" value="TreeGrafter"/>
</dbReference>
<dbReference type="GO" id="GO:0009318">
    <property type="term" value="C:exodeoxyribonuclease VII complex"/>
    <property type="evidence" value="ECO:0007669"/>
    <property type="project" value="InterPro"/>
</dbReference>
<dbReference type="GO" id="GO:0008855">
    <property type="term" value="F:exodeoxyribonuclease VII activity"/>
    <property type="evidence" value="ECO:0007669"/>
    <property type="project" value="UniProtKB-UniRule"/>
</dbReference>
<dbReference type="GO" id="GO:0006308">
    <property type="term" value="P:DNA catabolic process"/>
    <property type="evidence" value="ECO:0007669"/>
    <property type="project" value="UniProtKB-UniRule"/>
</dbReference>
<dbReference type="Gene3D" id="1.10.287.1040">
    <property type="entry name" value="Exonuclease VII, small subunit"/>
    <property type="match status" value="1"/>
</dbReference>
<dbReference type="HAMAP" id="MF_00337">
    <property type="entry name" value="Exonuc_7_S"/>
    <property type="match status" value="1"/>
</dbReference>
<dbReference type="InterPro" id="IPR003761">
    <property type="entry name" value="Exonuc_VII_S"/>
</dbReference>
<dbReference type="InterPro" id="IPR037004">
    <property type="entry name" value="Exonuc_VII_ssu_sf"/>
</dbReference>
<dbReference type="NCBIfam" id="NF002140">
    <property type="entry name" value="PRK00977.1-4"/>
    <property type="match status" value="1"/>
</dbReference>
<dbReference type="NCBIfam" id="TIGR01280">
    <property type="entry name" value="xseB"/>
    <property type="match status" value="1"/>
</dbReference>
<dbReference type="PANTHER" id="PTHR34137">
    <property type="entry name" value="EXODEOXYRIBONUCLEASE 7 SMALL SUBUNIT"/>
    <property type="match status" value="1"/>
</dbReference>
<dbReference type="PANTHER" id="PTHR34137:SF1">
    <property type="entry name" value="EXODEOXYRIBONUCLEASE 7 SMALL SUBUNIT"/>
    <property type="match status" value="1"/>
</dbReference>
<dbReference type="Pfam" id="PF02609">
    <property type="entry name" value="Exonuc_VII_S"/>
    <property type="match status" value="1"/>
</dbReference>
<dbReference type="PIRSF" id="PIRSF006488">
    <property type="entry name" value="Exonuc_VII_S"/>
    <property type="match status" value="1"/>
</dbReference>
<dbReference type="SUPFAM" id="SSF116842">
    <property type="entry name" value="XseB-like"/>
    <property type="match status" value="1"/>
</dbReference>
<sequence length="74" mass="8422">MAKKFDFNQGLIDLEKIVKTMESGDLSLENSLDYFSKGVALTKLCQSALNEAEQKIFMLTEQDNYTNENPLKDL</sequence>
<reference key="1">
    <citation type="journal article" date="2007" name="Science">
        <title>The Calyptogena magnifica chemoautotrophic symbiont genome.</title>
        <authorList>
            <person name="Newton I.L.G."/>
            <person name="Woyke T."/>
            <person name="Auchtung T.A."/>
            <person name="Dilly G.F."/>
            <person name="Dutton R.J."/>
            <person name="Fisher M.C."/>
            <person name="Fontanez K.M."/>
            <person name="Lau E."/>
            <person name="Stewart F.J."/>
            <person name="Richardson P.M."/>
            <person name="Barry K.W."/>
            <person name="Saunders E."/>
            <person name="Detter J.C."/>
            <person name="Wu D."/>
            <person name="Eisen J.A."/>
            <person name="Cavanaugh C.M."/>
        </authorList>
    </citation>
    <scope>NUCLEOTIDE SEQUENCE [LARGE SCALE GENOMIC DNA]</scope>
</reference>
<protein>
    <recommendedName>
        <fullName evidence="1">Exodeoxyribonuclease 7 small subunit</fullName>
        <ecNumber evidence="1">3.1.11.6</ecNumber>
    </recommendedName>
    <alternativeName>
        <fullName evidence="1">Exodeoxyribonuclease VII small subunit</fullName>
        <shortName evidence="1">Exonuclease VII small subunit</shortName>
    </alternativeName>
</protein>
<accession>A1AWD0</accession>
<evidence type="ECO:0000255" key="1">
    <source>
        <dbReference type="HAMAP-Rule" id="MF_00337"/>
    </source>
</evidence>
<gene>
    <name evidence="1" type="primary">xseB</name>
    <name type="ordered locus">Rmag_0481</name>
</gene>